<keyword id="KW-0963">Cytoplasm</keyword>
<keyword id="KW-0378">Hydrolase</keyword>
<keyword id="KW-1185">Reference proteome</keyword>
<keyword id="KW-0694">RNA-binding</keyword>
<keyword id="KW-0820">tRNA-binding</keyword>
<dbReference type="EC" id="3.1.1.29" evidence="1"/>
<dbReference type="EMBL" id="BA000045">
    <property type="protein sequence ID" value="BAC88479.1"/>
    <property type="molecule type" value="Genomic_DNA"/>
</dbReference>
<dbReference type="RefSeq" id="NP_923484.1">
    <property type="nucleotide sequence ID" value="NC_005125.1"/>
</dbReference>
<dbReference type="RefSeq" id="WP_011140541.1">
    <property type="nucleotide sequence ID" value="NC_005125.1"/>
</dbReference>
<dbReference type="SMR" id="Q7NN75"/>
<dbReference type="FunCoup" id="Q7NN75">
    <property type="interactions" value="217"/>
</dbReference>
<dbReference type="STRING" id="251221.gene:10758011"/>
<dbReference type="EnsemblBacteria" id="BAC88479">
    <property type="protein sequence ID" value="BAC88479"/>
    <property type="gene ID" value="BAC88479"/>
</dbReference>
<dbReference type="KEGG" id="gvi:gll0538"/>
<dbReference type="PATRIC" id="fig|251221.4.peg.547"/>
<dbReference type="eggNOG" id="COG0193">
    <property type="taxonomic scope" value="Bacteria"/>
</dbReference>
<dbReference type="HOGENOM" id="CLU_062456_4_1_3"/>
<dbReference type="InParanoid" id="Q7NN75"/>
<dbReference type="OrthoDB" id="9800507at2"/>
<dbReference type="PhylomeDB" id="Q7NN75"/>
<dbReference type="Proteomes" id="UP000000557">
    <property type="component" value="Chromosome"/>
</dbReference>
<dbReference type="GO" id="GO:0005737">
    <property type="term" value="C:cytoplasm"/>
    <property type="evidence" value="ECO:0007669"/>
    <property type="project" value="UniProtKB-SubCell"/>
</dbReference>
<dbReference type="GO" id="GO:0004045">
    <property type="term" value="F:peptidyl-tRNA hydrolase activity"/>
    <property type="evidence" value="ECO:0000318"/>
    <property type="project" value="GO_Central"/>
</dbReference>
<dbReference type="GO" id="GO:0000049">
    <property type="term" value="F:tRNA binding"/>
    <property type="evidence" value="ECO:0007669"/>
    <property type="project" value="UniProtKB-UniRule"/>
</dbReference>
<dbReference type="GO" id="GO:0006515">
    <property type="term" value="P:protein quality control for misfolded or incompletely synthesized proteins"/>
    <property type="evidence" value="ECO:0007669"/>
    <property type="project" value="UniProtKB-UniRule"/>
</dbReference>
<dbReference type="GO" id="GO:0072344">
    <property type="term" value="P:rescue of stalled ribosome"/>
    <property type="evidence" value="ECO:0007669"/>
    <property type="project" value="UniProtKB-UniRule"/>
</dbReference>
<dbReference type="CDD" id="cd00462">
    <property type="entry name" value="PTH"/>
    <property type="match status" value="1"/>
</dbReference>
<dbReference type="FunFam" id="3.40.50.1470:FF:000001">
    <property type="entry name" value="Peptidyl-tRNA hydrolase"/>
    <property type="match status" value="1"/>
</dbReference>
<dbReference type="Gene3D" id="3.40.50.1470">
    <property type="entry name" value="Peptidyl-tRNA hydrolase"/>
    <property type="match status" value="1"/>
</dbReference>
<dbReference type="HAMAP" id="MF_00083">
    <property type="entry name" value="Pept_tRNA_hydro_bact"/>
    <property type="match status" value="1"/>
</dbReference>
<dbReference type="InterPro" id="IPR001328">
    <property type="entry name" value="Pept_tRNA_hydro"/>
</dbReference>
<dbReference type="InterPro" id="IPR018171">
    <property type="entry name" value="Pept_tRNA_hydro_CS"/>
</dbReference>
<dbReference type="InterPro" id="IPR036416">
    <property type="entry name" value="Pept_tRNA_hydro_sf"/>
</dbReference>
<dbReference type="NCBIfam" id="TIGR00447">
    <property type="entry name" value="pth"/>
    <property type="match status" value="1"/>
</dbReference>
<dbReference type="PANTHER" id="PTHR17224">
    <property type="entry name" value="PEPTIDYL-TRNA HYDROLASE"/>
    <property type="match status" value="1"/>
</dbReference>
<dbReference type="PANTHER" id="PTHR17224:SF1">
    <property type="entry name" value="PEPTIDYL-TRNA HYDROLASE"/>
    <property type="match status" value="1"/>
</dbReference>
<dbReference type="Pfam" id="PF01195">
    <property type="entry name" value="Pept_tRNA_hydro"/>
    <property type="match status" value="1"/>
</dbReference>
<dbReference type="SUPFAM" id="SSF53178">
    <property type="entry name" value="Peptidyl-tRNA hydrolase-like"/>
    <property type="match status" value="1"/>
</dbReference>
<dbReference type="PROSITE" id="PS01195">
    <property type="entry name" value="PEPT_TRNA_HYDROL_1"/>
    <property type="match status" value="1"/>
</dbReference>
<dbReference type="PROSITE" id="PS01196">
    <property type="entry name" value="PEPT_TRNA_HYDROL_2"/>
    <property type="match status" value="1"/>
</dbReference>
<protein>
    <recommendedName>
        <fullName evidence="1">Peptidyl-tRNA hydrolase</fullName>
        <shortName evidence="1">Pth</shortName>
        <ecNumber evidence="1">3.1.1.29</ecNumber>
    </recommendedName>
</protein>
<reference key="1">
    <citation type="journal article" date="2003" name="DNA Res.">
        <title>Complete genome structure of Gloeobacter violaceus PCC 7421, a cyanobacterium that lacks thylakoids.</title>
        <authorList>
            <person name="Nakamura Y."/>
            <person name="Kaneko T."/>
            <person name="Sato S."/>
            <person name="Mimuro M."/>
            <person name="Miyashita H."/>
            <person name="Tsuchiya T."/>
            <person name="Sasamoto S."/>
            <person name="Watanabe A."/>
            <person name="Kawashima K."/>
            <person name="Kishida Y."/>
            <person name="Kiyokawa C."/>
            <person name="Kohara M."/>
            <person name="Matsumoto M."/>
            <person name="Matsuno A."/>
            <person name="Nakazaki N."/>
            <person name="Shimpo S."/>
            <person name="Takeuchi C."/>
            <person name="Yamada M."/>
            <person name="Tabata S."/>
        </authorList>
    </citation>
    <scope>NUCLEOTIDE SEQUENCE [LARGE SCALE GENOMIC DNA]</scope>
    <source>
        <strain>ATCC 29082 / PCC 7421</strain>
    </source>
</reference>
<evidence type="ECO:0000255" key="1">
    <source>
        <dbReference type="HAMAP-Rule" id="MF_00083"/>
    </source>
</evidence>
<sequence length="198" mass="21589">MELRLFVGLGNPGLQYTQTRHNAGFLAVDALAKRWQCSWVEKSRFKGYLAEGAGPGGRAILLKPTTYMNHSGQSVRAVADYFRLPPQQLLVLYDEVALPLGKIRLRPEGSAAGHNGIKSLIEHLGTNQFARLRIGIGREPPPPVLTNYVLGKFAPEEQEQLPAILDGCVEAVEAVLAKGLEKAMSIYNARSFGSPPDP</sequence>
<feature type="chain" id="PRO_0000187744" description="Peptidyl-tRNA hydrolase">
    <location>
        <begin position="1"/>
        <end position="198"/>
    </location>
</feature>
<feature type="active site" description="Proton acceptor" evidence="1">
    <location>
        <position position="21"/>
    </location>
</feature>
<feature type="binding site" evidence="1">
    <location>
        <position position="16"/>
    </location>
    <ligand>
        <name>tRNA</name>
        <dbReference type="ChEBI" id="CHEBI:17843"/>
    </ligand>
</feature>
<feature type="binding site" evidence="1">
    <location>
        <position position="67"/>
    </location>
    <ligand>
        <name>tRNA</name>
        <dbReference type="ChEBI" id="CHEBI:17843"/>
    </ligand>
</feature>
<feature type="binding site" evidence="1">
    <location>
        <position position="69"/>
    </location>
    <ligand>
        <name>tRNA</name>
        <dbReference type="ChEBI" id="CHEBI:17843"/>
    </ligand>
</feature>
<feature type="binding site" evidence="1">
    <location>
        <position position="115"/>
    </location>
    <ligand>
        <name>tRNA</name>
        <dbReference type="ChEBI" id="CHEBI:17843"/>
    </ligand>
</feature>
<feature type="site" description="Discriminates between blocked and unblocked aminoacyl-tRNA" evidence="1">
    <location>
        <position position="11"/>
    </location>
</feature>
<feature type="site" description="Stabilizes the basic form of H active site to accept a proton" evidence="1">
    <location>
        <position position="94"/>
    </location>
</feature>
<gene>
    <name evidence="1" type="primary">pth</name>
    <name type="ordered locus">gll0538</name>
</gene>
<accession>Q7NN75</accession>
<comment type="function">
    <text evidence="1">Hydrolyzes ribosome-free peptidyl-tRNAs (with 1 or more amino acids incorporated), which drop off the ribosome during protein synthesis, or as a result of ribosome stalling.</text>
</comment>
<comment type="function">
    <text evidence="1">Catalyzes the release of premature peptidyl moieties from peptidyl-tRNA molecules trapped in stalled 50S ribosomal subunits, and thus maintains levels of free tRNAs and 50S ribosomes.</text>
</comment>
<comment type="catalytic activity">
    <reaction evidence="1">
        <text>an N-acyl-L-alpha-aminoacyl-tRNA + H2O = an N-acyl-L-amino acid + a tRNA + H(+)</text>
        <dbReference type="Rhea" id="RHEA:54448"/>
        <dbReference type="Rhea" id="RHEA-COMP:10123"/>
        <dbReference type="Rhea" id="RHEA-COMP:13883"/>
        <dbReference type="ChEBI" id="CHEBI:15377"/>
        <dbReference type="ChEBI" id="CHEBI:15378"/>
        <dbReference type="ChEBI" id="CHEBI:59874"/>
        <dbReference type="ChEBI" id="CHEBI:78442"/>
        <dbReference type="ChEBI" id="CHEBI:138191"/>
        <dbReference type="EC" id="3.1.1.29"/>
    </reaction>
</comment>
<comment type="subunit">
    <text evidence="1">Monomer.</text>
</comment>
<comment type="subcellular location">
    <subcellularLocation>
        <location evidence="1">Cytoplasm</location>
    </subcellularLocation>
</comment>
<comment type="similarity">
    <text evidence="1">Belongs to the PTH family.</text>
</comment>
<organism>
    <name type="scientific">Gloeobacter violaceus (strain ATCC 29082 / PCC 7421)</name>
    <dbReference type="NCBI Taxonomy" id="251221"/>
    <lineage>
        <taxon>Bacteria</taxon>
        <taxon>Bacillati</taxon>
        <taxon>Cyanobacteriota</taxon>
        <taxon>Cyanophyceae</taxon>
        <taxon>Gloeobacterales</taxon>
        <taxon>Gloeobacteraceae</taxon>
        <taxon>Gloeobacter</taxon>
    </lineage>
</organism>
<name>PTH_GLOVI</name>
<proteinExistence type="inferred from homology"/>